<evidence type="ECO:0000255" key="1">
    <source>
        <dbReference type="HAMAP-Rule" id="MF_00285"/>
    </source>
</evidence>
<protein>
    <recommendedName>
        <fullName evidence="1">Potassium-transporting ATPase ATP-binding subunit 1</fullName>
        <ecNumber evidence="1">7.2.2.6</ecNumber>
    </recommendedName>
    <alternativeName>
        <fullName evidence="1">ATP phosphohydrolase [potassium-transporting] B chain 1</fullName>
    </alternativeName>
    <alternativeName>
        <fullName evidence="1">Potassium-binding and translocating subunit B 1</fullName>
    </alternativeName>
    <alternativeName>
        <fullName evidence="1">Potassium-translocating ATPase B chain 1</fullName>
    </alternativeName>
</protein>
<feature type="chain" id="PRO_0000046139" description="Potassium-transporting ATPase ATP-binding subunit 1">
    <location>
        <begin position="1"/>
        <end position="673"/>
    </location>
</feature>
<feature type="transmembrane region" description="Helical" evidence="1">
    <location>
        <begin position="34"/>
        <end position="54"/>
    </location>
</feature>
<feature type="transmembrane region" description="Helical" evidence="1">
    <location>
        <begin position="65"/>
        <end position="85"/>
    </location>
</feature>
<feature type="transmembrane region" description="Helical" evidence="1">
    <location>
        <begin position="216"/>
        <end position="236"/>
    </location>
</feature>
<feature type="transmembrane region" description="Helical" evidence="1">
    <location>
        <begin position="253"/>
        <end position="273"/>
    </location>
</feature>
<feature type="transmembrane region" description="Helical" evidence="1">
    <location>
        <begin position="581"/>
        <end position="601"/>
    </location>
</feature>
<feature type="transmembrane region" description="Helical" evidence="1">
    <location>
        <begin position="609"/>
        <end position="629"/>
    </location>
</feature>
<feature type="transmembrane region" description="Helical" evidence="1">
    <location>
        <begin position="649"/>
        <end position="669"/>
    </location>
</feature>
<feature type="active site" description="4-aspartylphosphate intermediate" evidence="1">
    <location>
        <position position="304"/>
    </location>
</feature>
<feature type="binding site" evidence="1">
    <location>
        <position position="341"/>
    </location>
    <ligand>
        <name>ATP</name>
        <dbReference type="ChEBI" id="CHEBI:30616"/>
    </ligand>
</feature>
<feature type="binding site" evidence="1">
    <location>
        <position position="345"/>
    </location>
    <ligand>
        <name>ATP</name>
        <dbReference type="ChEBI" id="CHEBI:30616"/>
    </ligand>
</feature>
<feature type="binding site" evidence="1">
    <location>
        <begin position="370"/>
        <end position="377"/>
    </location>
    <ligand>
        <name>ATP</name>
        <dbReference type="ChEBI" id="CHEBI:30616"/>
    </ligand>
</feature>
<feature type="binding site" evidence="1">
    <location>
        <position position="388"/>
    </location>
    <ligand>
        <name>ATP</name>
        <dbReference type="ChEBI" id="CHEBI:30616"/>
    </ligand>
</feature>
<feature type="binding site" evidence="1">
    <location>
        <position position="511"/>
    </location>
    <ligand>
        <name>Mg(2+)</name>
        <dbReference type="ChEBI" id="CHEBI:18420"/>
    </ligand>
</feature>
<feature type="binding site" evidence="1">
    <location>
        <position position="515"/>
    </location>
    <ligand>
        <name>Mg(2+)</name>
        <dbReference type="ChEBI" id="CHEBI:18420"/>
    </ligand>
</feature>
<reference key="1">
    <citation type="journal article" date="2004" name="Proc. Natl. Acad. Sci. U.S.A.">
        <title>Complete genomes of two clinical Staphylococcus aureus strains: evidence for the rapid evolution of virulence and drug resistance.</title>
        <authorList>
            <person name="Holden M.T.G."/>
            <person name="Feil E.J."/>
            <person name="Lindsay J.A."/>
            <person name="Peacock S.J."/>
            <person name="Day N.P.J."/>
            <person name="Enright M.C."/>
            <person name="Foster T.J."/>
            <person name="Moore C.E."/>
            <person name="Hurst L."/>
            <person name="Atkin R."/>
            <person name="Barron A."/>
            <person name="Bason N."/>
            <person name="Bentley S.D."/>
            <person name="Chillingworth C."/>
            <person name="Chillingworth T."/>
            <person name="Churcher C."/>
            <person name="Clark L."/>
            <person name="Corton C."/>
            <person name="Cronin A."/>
            <person name="Doggett J."/>
            <person name="Dowd L."/>
            <person name="Feltwell T."/>
            <person name="Hance Z."/>
            <person name="Harris B."/>
            <person name="Hauser H."/>
            <person name="Holroyd S."/>
            <person name="Jagels K."/>
            <person name="James K.D."/>
            <person name="Lennard N."/>
            <person name="Line A."/>
            <person name="Mayes R."/>
            <person name="Moule S."/>
            <person name="Mungall K."/>
            <person name="Ormond D."/>
            <person name="Quail M.A."/>
            <person name="Rabbinowitsch E."/>
            <person name="Rutherford K.M."/>
            <person name="Sanders M."/>
            <person name="Sharp S."/>
            <person name="Simmonds M."/>
            <person name="Stevens K."/>
            <person name="Whitehead S."/>
            <person name="Barrell B.G."/>
            <person name="Spratt B.G."/>
            <person name="Parkhill J."/>
        </authorList>
    </citation>
    <scope>NUCLEOTIDE SEQUENCE [LARGE SCALE GENOMIC DNA]</scope>
    <source>
        <strain>MRSA252</strain>
    </source>
</reference>
<accession>Q6GKN3</accession>
<keyword id="KW-0067">ATP-binding</keyword>
<keyword id="KW-1003">Cell membrane</keyword>
<keyword id="KW-0406">Ion transport</keyword>
<keyword id="KW-0460">Magnesium</keyword>
<keyword id="KW-0472">Membrane</keyword>
<keyword id="KW-0479">Metal-binding</keyword>
<keyword id="KW-0547">Nucleotide-binding</keyword>
<keyword id="KW-0597">Phosphoprotein</keyword>
<keyword id="KW-0630">Potassium</keyword>
<keyword id="KW-0633">Potassium transport</keyword>
<keyword id="KW-1278">Translocase</keyword>
<keyword id="KW-0812">Transmembrane</keyword>
<keyword id="KW-1133">Transmembrane helix</keyword>
<keyword id="KW-0813">Transport</keyword>
<gene>
    <name evidence="1" type="primary">kdpB1</name>
    <name type="ordered locus">SAR0071</name>
</gene>
<comment type="function">
    <text evidence="1">Part of the high-affinity ATP-driven potassium transport (or Kdp) system, which catalyzes the hydrolysis of ATP coupled with the electrogenic transport of potassium into the cytoplasm. This subunit is responsible for energy coupling to the transport system and for the release of the potassium ions to the cytoplasm.</text>
</comment>
<comment type="catalytic activity">
    <reaction evidence="1">
        <text>K(+)(out) + ATP + H2O = K(+)(in) + ADP + phosphate + H(+)</text>
        <dbReference type="Rhea" id="RHEA:16777"/>
        <dbReference type="ChEBI" id="CHEBI:15377"/>
        <dbReference type="ChEBI" id="CHEBI:15378"/>
        <dbReference type="ChEBI" id="CHEBI:29103"/>
        <dbReference type="ChEBI" id="CHEBI:30616"/>
        <dbReference type="ChEBI" id="CHEBI:43474"/>
        <dbReference type="ChEBI" id="CHEBI:456216"/>
        <dbReference type="EC" id="7.2.2.6"/>
    </reaction>
    <physiologicalReaction direction="left-to-right" evidence="1">
        <dbReference type="Rhea" id="RHEA:16778"/>
    </physiologicalReaction>
</comment>
<comment type="subunit">
    <text evidence="1">The system is composed of three essential subunits: KdpA, KdpB and KdpC.</text>
</comment>
<comment type="subcellular location">
    <subcellularLocation>
        <location evidence="1">Cell membrane</location>
        <topology evidence="1">Multi-pass membrane protein</topology>
    </subcellularLocation>
</comment>
<comment type="similarity">
    <text evidence="1">Belongs to the cation transport ATPase (P-type) (TC 3.A.3) family. Type IA subfamily.</text>
</comment>
<organism>
    <name type="scientific">Staphylococcus aureus (strain MRSA252)</name>
    <dbReference type="NCBI Taxonomy" id="282458"/>
    <lineage>
        <taxon>Bacteria</taxon>
        <taxon>Bacillati</taxon>
        <taxon>Bacillota</taxon>
        <taxon>Bacilli</taxon>
        <taxon>Bacillales</taxon>
        <taxon>Staphylococcaceae</taxon>
        <taxon>Staphylococcus</taxon>
    </lineage>
</organism>
<sequence>MAETTKIFESHLVKQALKDSVLKLYPVYMIKNPIMFVVEVGMLLALGLTIYPDLFHQESVSRLYVFSIFIILLLTLVFANFSEALAEGRGKAQANALRQTQTEMKARRIKQDGSYEMIDASDLKKGHIVRVATGEQIPNDGKVIKGLATVDESAITGESAPVIKESGGDFDNVIGGTSVASDWLEVEITSEPGHSFLDKMIGLVEGATRKKTPNEIALFTLLMTLTIIFLVVILTMYPLAKFLNFNLSIAMLIALAVCLIPTTIGGLLSAIGIAGMDRVTQFNILAKSGRSVETCGDVNVLILDKTGTITYGNRMADAFIPVKSSSFERLVKAAYESSIADDTPEGRSIVKLAYKQHIDLPQEVGEYIPFTAETRMSGVKFTTREVYKGAPNSMVKRVKEAGGHIPVDLDALVKGVSKKGGTPLVVLEDNEILGVIYLKDVIKDGLVERFRELREMGIETVMCTGDNELTAATIAKEAGVDRFVAECKPEDKINVIREEQAKGHIVAMTGDGTNDAPALAEANVGLAMNSGTMSAKEAANLIDLDSNPTKLMEVVLIGKQLLMTRGSLTTFSIANDIAKYFAILPAMFMAAMPAMNHLNIMHLHSPESAVLSALIFNALIIVLLIPIAMKGVKFKGASTQTILMKNMLVYGLGGMIVPFIGIKLIDLIIQLFV</sequence>
<name>KDPB1_STAAR</name>
<proteinExistence type="inferred from homology"/>
<dbReference type="EC" id="7.2.2.6" evidence="1"/>
<dbReference type="EMBL" id="BX571856">
    <property type="protein sequence ID" value="CAG39098.1"/>
    <property type="molecule type" value="Genomic_DNA"/>
</dbReference>
<dbReference type="RefSeq" id="WP_000852430.1">
    <property type="nucleotide sequence ID" value="NC_002952.2"/>
</dbReference>
<dbReference type="SMR" id="Q6GKN3"/>
<dbReference type="KEGG" id="sar:SAR0071"/>
<dbReference type="HOGENOM" id="CLU_025728_2_0_9"/>
<dbReference type="Proteomes" id="UP000000596">
    <property type="component" value="Chromosome"/>
</dbReference>
<dbReference type="GO" id="GO:0005886">
    <property type="term" value="C:plasma membrane"/>
    <property type="evidence" value="ECO:0007669"/>
    <property type="project" value="UniProtKB-SubCell"/>
</dbReference>
<dbReference type="GO" id="GO:0005524">
    <property type="term" value="F:ATP binding"/>
    <property type="evidence" value="ECO:0007669"/>
    <property type="project" value="UniProtKB-UniRule"/>
</dbReference>
<dbReference type="GO" id="GO:0016887">
    <property type="term" value="F:ATP hydrolysis activity"/>
    <property type="evidence" value="ECO:0007669"/>
    <property type="project" value="InterPro"/>
</dbReference>
<dbReference type="GO" id="GO:0000287">
    <property type="term" value="F:magnesium ion binding"/>
    <property type="evidence" value="ECO:0007669"/>
    <property type="project" value="UniProtKB-UniRule"/>
</dbReference>
<dbReference type="GO" id="GO:0008556">
    <property type="term" value="F:P-type potassium transmembrane transporter activity"/>
    <property type="evidence" value="ECO:0007669"/>
    <property type="project" value="UniProtKB-UniRule"/>
</dbReference>
<dbReference type="FunFam" id="2.70.150.10:FF:000010">
    <property type="entry name" value="Potassium-transporting ATPase ATP-binding subunit"/>
    <property type="match status" value="1"/>
</dbReference>
<dbReference type="FunFam" id="3.40.1110.10:FF:000007">
    <property type="entry name" value="Potassium-transporting ATPase ATP-binding subunit"/>
    <property type="match status" value="1"/>
</dbReference>
<dbReference type="Gene3D" id="3.40.1110.10">
    <property type="entry name" value="Calcium-transporting ATPase, cytoplasmic domain N"/>
    <property type="match status" value="1"/>
</dbReference>
<dbReference type="Gene3D" id="2.70.150.10">
    <property type="entry name" value="Calcium-transporting ATPase, cytoplasmic transduction domain A"/>
    <property type="match status" value="1"/>
</dbReference>
<dbReference type="Gene3D" id="3.40.50.1000">
    <property type="entry name" value="HAD superfamily/HAD-like"/>
    <property type="match status" value="1"/>
</dbReference>
<dbReference type="HAMAP" id="MF_00285">
    <property type="entry name" value="KdpB"/>
    <property type="match status" value="1"/>
</dbReference>
<dbReference type="InterPro" id="IPR023299">
    <property type="entry name" value="ATPase_P-typ_cyto_dom_N"/>
</dbReference>
<dbReference type="InterPro" id="IPR018303">
    <property type="entry name" value="ATPase_P-typ_P_site"/>
</dbReference>
<dbReference type="InterPro" id="IPR023298">
    <property type="entry name" value="ATPase_P-typ_TM_dom_sf"/>
</dbReference>
<dbReference type="InterPro" id="IPR008250">
    <property type="entry name" value="ATPase_P-typ_transduc_dom_A_sf"/>
</dbReference>
<dbReference type="InterPro" id="IPR036412">
    <property type="entry name" value="HAD-like_sf"/>
</dbReference>
<dbReference type="InterPro" id="IPR023214">
    <property type="entry name" value="HAD_sf"/>
</dbReference>
<dbReference type="InterPro" id="IPR006391">
    <property type="entry name" value="P-type_ATPase_bsu_IA"/>
</dbReference>
<dbReference type="InterPro" id="IPR001757">
    <property type="entry name" value="P_typ_ATPase"/>
</dbReference>
<dbReference type="InterPro" id="IPR044492">
    <property type="entry name" value="P_typ_ATPase_HD_dom"/>
</dbReference>
<dbReference type="NCBIfam" id="TIGR01494">
    <property type="entry name" value="ATPase_P-type"/>
    <property type="match status" value="1"/>
</dbReference>
<dbReference type="NCBIfam" id="TIGR01497">
    <property type="entry name" value="kdpB"/>
    <property type="match status" value="1"/>
</dbReference>
<dbReference type="NCBIfam" id="NF010609">
    <property type="entry name" value="PRK14010.1"/>
    <property type="match status" value="1"/>
</dbReference>
<dbReference type="PANTHER" id="PTHR43743">
    <property type="entry name" value="POTASSIUM-TRANSPORTING ATPASE ATP-BINDING SUBUNIT"/>
    <property type="match status" value="1"/>
</dbReference>
<dbReference type="PANTHER" id="PTHR43743:SF1">
    <property type="entry name" value="POTASSIUM-TRANSPORTING ATPASE ATP-BINDING SUBUNIT"/>
    <property type="match status" value="1"/>
</dbReference>
<dbReference type="Pfam" id="PF00122">
    <property type="entry name" value="E1-E2_ATPase"/>
    <property type="match status" value="1"/>
</dbReference>
<dbReference type="Pfam" id="PF00702">
    <property type="entry name" value="Hydrolase"/>
    <property type="match status" value="1"/>
</dbReference>
<dbReference type="PRINTS" id="PR00119">
    <property type="entry name" value="CATATPASE"/>
</dbReference>
<dbReference type="SFLD" id="SFLDG00002">
    <property type="entry name" value="C1.7:_P-type_atpase_like"/>
    <property type="match status" value="1"/>
</dbReference>
<dbReference type="SFLD" id="SFLDF00027">
    <property type="entry name" value="p-type_atpase"/>
    <property type="match status" value="1"/>
</dbReference>
<dbReference type="SUPFAM" id="SSF81653">
    <property type="entry name" value="Calcium ATPase, transduction domain A"/>
    <property type="match status" value="1"/>
</dbReference>
<dbReference type="SUPFAM" id="SSF81665">
    <property type="entry name" value="Calcium ATPase, transmembrane domain M"/>
    <property type="match status" value="1"/>
</dbReference>
<dbReference type="SUPFAM" id="SSF56784">
    <property type="entry name" value="HAD-like"/>
    <property type="match status" value="1"/>
</dbReference>
<dbReference type="PROSITE" id="PS00154">
    <property type="entry name" value="ATPASE_E1_E2"/>
    <property type="match status" value="1"/>
</dbReference>